<reference key="1">
    <citation type="journal article" date="1997" name="Nature">
        <title>The complete genome sequence of the hyperthermophilic, sulphate-reducing archaeon Archaeoglobus fulgidus.</title>
        <authorList>
            <person name="Klenk H.-P."/>
            <person name="Clayton R.A."/>
            <person name="Tomb J.-F."/>
            <person name="White O."/>
            <person name="Nelson K.E."/>
            <person name="Ketchum K.A."/>
            <person name="Dodson R.J."/>
            <person name="Gwinn M.L."/>
            <person name="Hickey E.K."/>
            <person name="Peterson J.D."/>
            <person name="Richardson D.L."/>
            <person name="Kerlavage A.R."/>
            <person name="Graham D.E."/>
            <person name="Kyrpides N.C."/>
            <person name="Fleischmann R.D."/>
            <person name="Quackenbush J."/>
            <person name="Lee N.H."/>
            <person name="Sutton G.G."/>
            <person name="Gill S.R."/>
            <person name="Kirkness E.F."/>
            <person name="Dougherty B.A."/>
            <person name="McKenney K."/>
            <person name="Adams M.D."/>
            <person name="Loftus B.J."/>
            <person name="Peterson S.N."/>
            <person name="Reich C.I."/>
            <person name="McNeil L.K."/>
            <person name="Badger J.H."/>
            <person name="Glodek A."/>
            <person name="Zhou L."/>
            <person name="Overbeek R."/>
            <person name="Gocayne J.D."/>
            <person name="Weidman J.F."/>
            <person name="McDonald L.A."/>
            <person name="Utterback T.R."/>
            <person name="Cotton M.D."/>
            <person name="Spriggs T."/>
            <person name="Artiach P."/>
            <person name="Kaine B.P."/>
            <person name="Sykes S.M."/>
            <person name="Sadow P.W."/>
            <person name="D'Andrea K.P."/>
            <person name="Bowman C."/>
            <person name="Fujii C."/>
            <person name="Garland S.A."/>
            <person name="Mason T.M."/>
            <person name="Olsen G.J."/>
            <person name="Fraser C.M."/>
            <person name="Smith H.O."/>
            <person name="Woese C.R."/>
            <person name="Venter J.C."/>
        </authorList>
    </citation>
    <scope>NUCLEOTIDE SEQUENCE [LARGE SCALE GENOMIC DNA]</scope>
    <source>
        <strain>ATCC 49558 / DSM 4304 / JCM 9628 / NBRC 100126 / VC-16</strain>
    </source>
</reference>
<dbReference type="EMBL" id="AE000782">
    <property type="protein sequence ID" value="AAB89182.1"/>
    <property type="molecule type" value="Genomic_DNA"/>
</dbReference>
<dbReference type="PIR" id="D69509">
    <property type="entry name" value="D69509"/>
</dbReference>
<dbReference type="RefSeq" id="WP_010879569.1">
    <property type="nucleotide sequence ID" value="NC_000917.1"/>
</dbReference>
<dbReference type="STRING" id="224325.AF_2077"/>
<dbReference type="PaxDb" id="224325-AF_2077"/>
<dbReference type="DNASU" id="1485304"/>
<dbReference type="EnsemblBacteria" id="AAB89182">
    <property type="protein sequence ID" value="AAB89182"/>
    <property type="gene ID" value="AF_2077"/>
</dbReference>
<dbReference type="KEGG" id="afu:AF_2077"/>
<dbReference type="eggNOG" id="arCOG02698">
    <property type="taxonomic scope" value="Archaea"/>
</dbReference>
<dbReference type="HOGENOM" id="CLU_846264_0_0_2"/>
<dbReference type="OrthoDB" id="86285at2157"/>
<dbReference type="Proteomes" id="UP000002199">
    <property type="component" value="Chromosome"/>
</dbReference>
<accession>O28202</accession>
<organism>
    <name type="scientific">Archaeoglobus fulgidus (strain ATCC 49558 / DSM 4304 / JCM 9628 / NBRC 100126 / VC-16)</name>
    <dbReference type="NCBI Taxonomy" id="224325"/>
    <lineage>
        <taxon>Archaea</taxon>
        <taxon>Methanobacteriati</taxon>
        <taxon>Methanobacteriota</taxon>
        <taxon>Archaeoglobi</taxon>
        <taxon>Archaeoglobales</taxon>
        <taxon>Archaeoglobaceae</taxon>
        <taxon>Archaeoglobus</taxon>
    </lineage>
</organism>
<feature type="signal peptide" evidence="1">
    <location>
        <begin position="1"/>
        <end position="23"/>
    </location>
</feature>
<feature type="chain" id="PRO_0000013679" description="Uncharacterized protein AF_2077">
    <location>
        <begin position="24"/>
        <end position="270"/>
    </location>
</feature>
<evidence type="ECO:0000255" key="1"/>
<sequence>MKKLLIILAATLVLVLGSSGNFREYYGARGVAVNIADNNSSYIGFECPEMTLYLANGDSTGVISVKNNLGEDVELYFSTPNDILTFSNPTFLYAGEEKLVEAEFRGSQGEYTIPIDIEAFWDNGSAKIPACSVKVVDPAVRMSKVLLSGNTTVPLFTREVWKFRILVESDAGDNYTILDTIPAEFEVLSIAASDGSFATHHPGAGRSCTTKIVWDVYVEGTEFMDVTIATKHNPAGKQEFTSPGSYNLNDGAEIKGLGIVSNPIIVKAVR</sequence>
<proteinExistence type="inferred from homology"/>
<gene>
    <name type="ordered locus">AF_2077</name>
</gene>
<keyword id="KW-1185">Reference proteome</keyword>
<keyword id="KW-0732">Signal</keyword>
<name>Y2077_ARCFU</name>
<protein>
    <recommendedName>
        <fullName>Uncharacterized protein AF_2077</fullName>
    </recommendedName>
</protein>